<dbReference type="EMBL" id="AF019963">
    <property type="protein sequence ID" value="AAC31675.1"/>
    <property type="molecule type" value="mRNA"/>
</dbReference>
<dbReference type="SMR" id="O77510"/>
<dbReference type="GlyCosmos" id="O77510">
    <property type="glycosylation" value="1 site, No reported glycans"/>
</dbReference>
<dbReference type="GO" id="GO:0009986">
    <property type="term" value="C:cell surface"/>
    <property type="evidence" value="ECO:0007669"/>
    <property type="project" value="TreeGrafter"/>
</dbReference>
<dbReference type="GO" id="GO:0005615">
    <property type="term" value="C:extracellular space"/>
    <property type="evidence" value="ECO:0007669"/>
    <property type="project" value="UniProtKB-KW"/>
</dbReference>
<dbReference type="GO" id="GO:0005886">
    <property type="term" value="C:plasma membrane"/>
    <property type="evidence" value="ECO:0007669"/>
    <property type="project" value="UniProtKB-SubCell"/>
</dbReference>
<dbReference type="GO" id="GO:0005125">
    <property type="term" value="F:cytokine activity"/>
    <property type="evidence" value="ECO:0007669"/>
    <property type="project" value="UniProtKB-KW"/>
</dbReference>
<dbReference type="GO" id="GO:0005164">
    <property type="term" value="F:tumor necrosis factor receptor binding"/>
    <property type="evidence" value="ECO:0007669"/>
    <property type="project" value="InterPro"/>
</dbReference>
<dbReference type="GO" id="GO:0008625">
    <property type="term" value="P:extrinsic apoptotic signaling pathway via death domain receptors"/>
    <property type="evidence" value="ECO:0007669"/>
    <property type="project" value="TreeGrafter"/>
</dbReference>
<dbReference type="GO" id="GO:0006955">
    <property type="term" value="P:immune response"/>
    <property type="evidence" value="ECO:0007669"/>
    <property type="project" value="InterPro"/>
</dbReference>
<dbReference type="GO" id="GO:0097527">
    <property type="term" value="P:necroptotic signaling pathway"/>
    <property type="evidence" value="ECO:0000250"/>
    <property type="project" value="UniProtKB"/>
</dbReference>
<dbReference type="GO" id="GO:0043242">
    <property type="term" value="P:negative regulation of protein-containing complex disassembly"/>
    <property type="evidence" value="ECO:0000250"/>
    <property type="project" value="UniProtKB"/>
</dbReference>
<dbReference type="GO" id="GO:0043065">
    <property type="term" value="P:positive regulation of apoptotic process"/>
    <property type="evidence" value="ECO:0000250"/>
    <property type="project" value="UniProtKB"/>
</dbReference>
<dbReference type="GO" id="GO:0043123">
    <property type="term" value="P:positive regulation of canonical NF-kappaB signal transduction"/>
    <property type="evidence" value="ECO:0007669"/>
    <property type="project" value="TreeGrafter"/>
</dbReference>
<dbReference type="GO" id="GO:2001238">
    <property type="term" value="P:positive regulation of extrinsic apoptotic signaling pathway"/>
    <property type="evidence" value="ECO:0007669"/>
    <property type="project" value="TreeGrafter"/>
</dbReference>
<dbReference type="GO" id="GO:0043507">
    <property type="term" value="P:positive regulation of JUN kinase activity"/>
    <property type="evidence" value="ECO:0000250"/>
    <property type="project" value="UniProtKB"/>
</dbReference>
<dbReference type="GO" id="GO:0043406">
    <property type="term" value="P:positive regulation of MAP kinase activity"/>
    <property type="evidence" value="ECO:0000250"/>
    <property type="project" value="UniProtKB"/>
</dbReference>
<dbReference type="GO" id="GO:0051092">
    <property type="term" value="P:positive regulation of NF-kappaB transcription factor activity"/>
    <property type="evidence" value="ECO:0000250"/>
    <property type="project" value="UniProtKB"/>
</dbReference>
<dbReference type="GO" id="GO:0001934">
    <property type="term" value="P:positive regulation of protein phosphorylation"/>
    <property type="evidence" value="ECO:0000250"/>
    <property type="project" value="UniProtKB"/>
</dbReference>
<dbReference type="GO" id="GO:0043243">
    <property type="term" value="P:positive regulation of protein-containing complex disassembly"/>
    <property type="evidence" value="ECO:0000250"/>
    <property type="project" value="UniProtKB"/>
</dbReference>
<dbReference type="GO" id="GO:0045944">
    <property type="term" value="P:positive regulation of transcription by RNA polymerase II"/>
    <property type="evidence" value="ECO:0007669"/>
    <property type="project" value="TreeGrafter"/>
</dbReference>
<dbReference type="GO" id="GO:0065008">
    <property type="term" value="P:regulation of biological quality"/>
    <property type="evidence" value="ECO:0007669"/>
    <property type="project" value="UniProtKB-ARBA"/>
</dbReference>
<dbReference type="GO" id="GO:0050793">
    <property type="term" value="P:regulation of developmental process"/>
    <property type="evidence" value="ECO:0007669"/>
    <property type="project" value="UniProtKB-ARBA"/>
</dbReference>
<dbReference type="GO" id="GO:0051239">
    <property type="term" value="P:regulation of multicellular organismal process"/>
    <property type="evidence" value="ECO:0007669"/>
    <property type="project" value="UniProtKB-ARBA"/>
</dbReference>
<dbReference type="GO" id="GO:0051046">
    <property type="term" value="P:regulation of secretion"/>
    <property type="evidence" value="ECO:0007669"/>
    <property type="project" value="UniProtKB-ARBA"/>
</dbReference>
<dbReference type="GO" id="GO:0033209">
    <property type="term" value="P:tumor necrosis factor-mediated signaling pathway"/>
    <property type="evidence" value="ECO:0007669"/>
    <property type="project" value="TreeGrafter"/>
</dbReference>
<dbReference type="GO" id="GO:0010573">
    <property type="term" value="P:vascular endothelial growth factor production"/>
    <property type="evidence" value="ECO:0000250"/>
    <property type="project" value="UniProtKB"/>
</dbReference>
<dbReference type="CDD" id="cd00184">
    <property type="entry name" value="TNF"/>
    <property type="match status" value="1"/>
</dbReference>
<dbReference type="FunFam" id="2.60.120.40:FF:000007">
    <property type="entry name" value="Tumor necrosis factor"/>
    <property type="match status" value="1"/>
</dbReference>
<dbReference type="Gene3D" id="2.60.120.40">
    <property type="match status" value="1"/>
</dbReference>
<dbReference type="InterPro" id="IPR006053">
    <property type="entry name" value="TNF"/>
</dbReference>
<dbReference type="InterPro" id="IPR002959">
    <property type="entry name" value="TNF_alpha"/>
</dbReference>
<dbReference type="InterPro" id="IPR021184">
    <property type="entry name" value="TNF_CS"/>
</dbReference>
<dbReference type="InterPro" id="IPR006052">
    <property type="entry name" value="TNF_dom"/>
</dbReference>
<dbReference type="InterPro" id="IPR008983">
    <property type="entry name" value="Tumour_necrosis_fac-like_dom"/>
</dbReference>
<dbReference type="PANTHER" id="PTHR11471:SF23">
    <property type="entry name" value="TUMOR NECROSIS FACTOR"/>
    <property type="match status" value="1"/>
</dbReference>
<dbReference type="PANTHER" id="PTHR11471">
    <property type="entry name" value="TUMOR NECROSIS FACTOR FAMILY MEMBER"/>
    <property type="match status" value="1"/>
</dbReference>
<dbReference type="Pfam" id="PF00229">
    <property type="entry name" value="TNF"/>
    <property type="match status" value="1"/>
</dbReference>
<dbReference type="PRINTS" id="PR01234">
    <property type="entry name" value="TNECROSISFCT"/>
</dbReference>
<dbReference type="PRINTS" id="PR01235">
    <property type="entry name" value="TNFALPHA"/>
</dbReference>
<dbReference type="SMART" id="SM00207">
    <property type="entry name" value="TNF"/>
    <property type="match status" value="1"/>
</dbReference>
<dbReference type="SUPFAM" id="SSF49842">
    <property type="entry name" value="TNF-like"/>
    <property type="match status" value="1"/>
</dbReference>
<dbReference type="PROSITE" id="PS00251">
    <property type="entry name" value="THD_1"/>
    <property type="match status" value="1"/>
</dbReference>
<dbReference type="PROSITE" id="PS50049">
    <property type="entry name" value="THD_2"/>
    <property type="match status" value="1"/>
</dbReference>
<sequence length="233" mass="25658">MSTESMIRDVELAEEALPRKTAGPQGSRRCWFLSLFSFLLVAGATTLFCLLHFGVIGPQREEFPKDPSLISPLAQAVRSSSRTPSDKPVVHVVANPQAEGQLQWLNRRANALLANGVELTDNQLVVPSEGLYLIYSQVLFKGQGCPSNHVLLTHTISRIAVSYQTKVNLLSAIKSPCQRETPEGAEAKPWYEPIYLGGVFQLEKGDRLSAEINLPDYLDFAESGQVYFGIIAL</sequence>
<organism>
    <name type="scientific">Papio hamadryas ursinus</name>
    <name type="common">Chacma baboon</name>
    <dbReference type="NCBI Taxonomy" id="36229"/>
    <lineage>
        <taxon>Eukaryota</taxon>
        <taxon>Metazoa</taxon>
        <taxon>Chordata</taxon>
        <taxon>Craniata</taxon>
        <taxon>Vertebrata</taxon>
        <taxon>Euteleostomi</taxon>
        <taxon>Mammalia</taxon>
        <taxon>Eutheria</taxon>
        <taxon>Euarchontoglires</taxon>
        <taxon>Primates</taxon>
        <taxon>Haplorrhini</taxon>
        <taxon>Catarrhini</taxon>
        <taxon>Cercopithecidae</taxon>
        <taxon>Cercopithecinae</taxon>
        <taxon>Papio</taxon>
    </lineage>
</organism>
<reference key="1">
    <citation type="journal article" date="1997" name="Mol. Immunol.">
        <title>Complementary DNA (cDNA) sequence of baboon tumor necrosis factor alpha.</title>
        <authorList>
            <person name="Haudek S.B."/>
            <person name="Redl H."/>
            <person name="Schlag G."/>
            <person name="Giroir B.P."/>
        </authorList>
    </citation>
    <scope>NUCLEOTIDE SEQUENCE [MRNA]</scope>
</reference>
<comment type="function">
    <text evidence="2 3">Cytokine that binds to TNFRSF1A/TNFR1 and TNFRSF1B/TNFBR. It is mainly secreted by macrophages and can induce cell death of certain tumor cell lines. It is potent pyrogen causing fever by direct action or by stimulation of interleukin-1 secretion and is implicated in the induction of cachexia, Under certain conditions it can stimulate cell proliferation and induce cell differentiation (By similarity). Induces insulin resistance in adipocytes via inhibition of insulin-induced IRS1 tyrosine phosphorylation and insulin-induced glucose uptake. Induces GKAP42 protein degradation in adipocytes which is partially responsible for TNF-induced insulin resistance (By similarity). Plays a role in angiogenesis by inducing VEGF production synergistically with IL1B and IL6 (By similarity). Promotes osteoclastogenesis and therefore mediates bone resorption (By similarity).</text>
</comment>
<comment type="function">
    <text evidence="2">The TNF intracellular domain (ICD) form induces IL12 production in dendritic cells.</text>
</comment>
<comment type="subunit">
    <text evidence="1">Homotrimer. Interacts with SPPL2B (By similarity).</text>
</comment>
<comment type="subcellular location">
    <subcellularLocation>
        <location evidence="1">Cell membrane</location>
        <topology evidence="1">Single-pass type II membrane protein</topology>
    </subcellularLocation>
</comment>
<comment type="subcellular location">
    <molecule>Tumor necrosis factor, membrane form</molecule>
    <subcellularLocation>
        <location evidence="1">Membrane</location>
        <topology evidence="1">Single-pass type II membrane protein</topology>
    </subcellularLocation>
</comment>
<comment type="subcellular location">
    <molecule>Tumor necrosis factor, soluble form</molecule>
    <subcellularLocation>
        <location evidence="1">Secreted</location>
    </subcellularLocation>
</comment>
<comment type="subcellular location">
    <molecule>C-domain 1</molecule>
    <subcellularLocation>
        <location evidence="1">Secreted</location>
    </subcellularLocation>
</comment>
<comment type="subcellular location">
    <molecule>C-domain 2</molecule>
    <subcellularLocation>
        <location evidence="1">Secreted</location>
    </subcellularLocation>
</comment>
<comment type="PTM">
    <text evidence="1">The soluble form derives from the membrane form by proteolytic processing. The membrane-bound form is further proteolytically processed by SPPL2A or SPPL2B through regulated intramembrane proteolysis producing TNF intracellular domains (ICD1 and ICD2) released in the cytosol and TNF C-domain 1 and C-domain 2 secreted into the extracellular space (By similarity).</text>
</comment>
<comment type="PTM">
    <text evidence="1">The membrane form, but not the soluble form, is phosphorylated on serine residues. Dephosphorylation of the membrane form occurs by binding to soluble TNFRSF1A/TNFR1 (By similarity).</text>
</comment>
<comment type="PTM">
    <text evidence="1">O-glycosylated; glycans contain galactose, N-acetylgalactosamine and N-acetylneuraminic acid.</text>
</comment>
<comment type="PTM">
    <molecule>Tumor necrosis factor, soluble form</molecule>
    <text evidence="2">The soluble form is demyristoylated by SIRT6, promoting its secretion.</text>
</comment>
<comment type="similarity">
    <text evidence="6">Belongs to the tumor necrosis factor family.</text>
</comment>
<keyword id="KW-1003">Cell membrane</keyword>
<keyword id="KW-0202">Cytokine</keyword>
<keyword id="KW-1015">Disulfide bond</keyword>
<keyword id="KW-0325">Glycoprotein</keyword>
<keyword id="KW-0449">Lipoprotein</keyword>
<keyword id="KW-0472">Membrane</keyword>
<keyword id="KW-0519">Myristate</keyword>
<keyword id="KW-0597">Phosphoprotein</keyword>
<keyword id="KW-0964">Secreted</keyword>
<keyword id="KW-0735">Signal-anchor</keyword>
<keyword id="KW-0812">Transmembrane</keyword>
<keyword id="KW-1133">Transmembrane helix</keyword>
<gene>
    <name type="primary">TNF</name>
    <name type="synonym">TNFA</name>
    <name type="synonym">TNFSF2</name>
</gene>
<evidence type="ECO:0000250" key="1"/>
<evidence type="ECO:0000250" key="2">
    <source>
        <dbReference type="UniProtKB" id="P01375"/>
    </source>
</evidence>
<evidence type="ECO:0000250" key="3">
    <source>
        <dbReference type="UniProtKB" id="P06804"/>
    </source>
</evidence>
<evidence type="ECO:0000255" key="4"/>
<evidence type="ECO:0000255" key="5">
    <source>
        <dbReference type="PROSITE-ProRule" id="PRU01387"/>
    </source>
</evidence>
<evidence type="ECO:0000305" key="6"/>
<feature type="chain" id="PRO_0000034441" description="Tumor necrosis factor, membrane form">
    <location>
        <begin position="1"/>
        <end position="233"/>
    </location>
</feature>
<feature type="chain" id="PRO_0000417267" description="Intracellular domain 1" evidence="1">
    <location>
        <begin position="1"/>
        <end position="39"/>
    </location>
</feature>
<feature type="chain" id="PRO_0000417268" description="Intracellular domain 2" evidence="1">
    <location>
        <begin position="1"/>
        <end position="35"/>
    </location>
</feature>
<feature type="chain" id="PRO_0000417269" description="C-domain 1" evidence="1">
    <location>
        <begin position="50"/>
        <end status="unknown"/>
    </location>
</feature>
<feature type="chain" id="PRO_0000417270" description="C-domain 2" evidence="1">
    <location>
        <begin position="52"/>
        <end status="unknown"/>
    </location>
</feature>
<feature type="chain" id="PRO_0000034442" description="Tumor necrosis factor, soluble form">
    <location>
        <begin position="77"/>
        <end position="233"/>
    </location>
</feature>
<feature type="topological domain" description="Cytoplasmic" evidence="4">
    <location>
        <begin position="1"/>
        <end position="35"/>
    </location>
</feature>
<feature type="transmembrane region" description="Helical; Signal-anchor for type II membrane protein" evidence="4">
    <location>
        <begin position="36"/>
        <end position="56"/>
    </location>
</feature>
<feature type="topological domain" description="Extracellular" evidence="4">
    <location>
        <begin position="57"/>
        <end position="233"/>
    </location>
</feature>
<feature type="domain" description="THD" evidence="5">
    <location>
        <begin position="88"/>
        <end position="233"/>
    </location>
</feature>
<feature type="site" description="Cleavage; by SPPL2A or SPPL2B" evidence="1">
    <location>
        <begin position="34"/>
        <end position="35"/>
    </location>
</feature>
<feature type="site" description="Cleavage; by SPPL2A or SPPL2B" evidence="1">
    <location>
        <begin position="39"/>
        <end position="40"/>
    </location>
</feature>
<feature type="site" description="Cleavage; by SPPL2A or SPPL2B" evidence="1">
    <location>
        <begin position="49"/>
        <end position="50"/>
    </location>
</feature>
<feature type="site" description="Cleavage; by SPPL2A or SPPL2B" evidence="1">
    <location>
        <begin position="51"/>
        <end position="52"/>
    </location>
</feature>
<feature type="site" description="Cleavage; by ADAM17" evidence="1">
    <location>
        <begin position="76"/>
        <end position="77"/>
    </location>
</feature>
<feature type="modified residue" description="Phosphoserine; by CK1" evidence="1">
    <location>
        <position position="2"/>
    </location>
</feature>
<feature type="lipid moiety-binding region" description="N6-myristoyl lysine" evidence="2">
    <location>
        <position position="20"/>
    </location>
</feature>
<feature type="glycosylation site" description="O-linked (GalNAc...) serine; in soluble form" evidence="1">
    <location>
        <position position="80"/>
    </location>
</feature>
<feature type="disulfide bond" evidence="5">
    <location>
        <begin position="145"/>
        <end position="177"/>
    </location>
</feature>
<name>TNFA_PAPHU</name>
<protein>
    <recommendedName>
        <fullName>Tumor necrosis factor</fullName>
    </recommendedName>
    <alternativeName>
        <fullName>Cachectin</fullName>
    </alternativeName>
    <alternativeName>
        <fullName>TNF-alpha</fullName>
    </alternativeName>
    <alternativeName>
        <fullName>Tumor necrosis factor ligand superfamily member 2</fullName>
        <shortName>TNF-a</shortName>
    </alternativeName>
    <component>
        <recommendedName>
            <fullName>Tumor necrosis factor, membrane form</fullName>
        </recommendedName>
        <alternativeName>
            <fullName>N-terminal fragment</fullName>
            <shortName>NTF</shortName>
        </alternativeName>
    </component>
    <component>
        <recommendedName>
            <fullName>Intracellular domain 1</fullName>
            <shortName>ICD1</shortName>
        </recommendedName>
    </component>
    <component>
        <recommendedName>
            <fullName>Intracellular domain 2</fullName>
            <shortName>ICD2</shortName>
        </recommendedName>
    </component>
    <component>
        <recommendedName>
            <fullName>C-domain 1</fullName>
        </recommendedName>
    </component>
    <component>
        <recommendedName>
            <fullName>C-domain 2</fullName>
        </recommendedName>
    </component>
    <component>
        <recommendedName>
            <fullName>Tumor necrosis factor, soluble form</fullName>
        </recommendedName>
    </component>
</protein>
<accession>O77510</accession>
<proteinExistence type="evidence at transcript level"/>